<proteinExistence type="evidence at protein level"/>
<accession>P49153</accession>
<organism>
    <name type="scientific">Trypanosoma brucei brucei</name>
    <dbReference type="NCBI Taxonomy" id="5702"/>
    <lineage>
        <taxon>Eukaryota</taxon>
        <taxon>Discoba</taxon>
        <taxon>Euglenozoa</taxon>
        <taxon>Kinetoplastea</taxon>
        <taxon>Metakinetoplastina</taxon>
        <taxon>Trypanosomatida</taxon>
        <taxon>Trypanosomatidae</taxon>
        <taxon>Trypanosoma</taxon>
    </lineage>
</organism>
<evidence type="ECO:0000305" key="1"/>
<reference key="1">
    <citation type="submission" date="1995-10" db="EMBL/GenBank/DDBJ databases">
        <authorList>
            <person name="Wilson K."/>
            <person name="Uyetake L."/>
            <person name="Boothroyd J.C."/>
        </authorList>
    </citation>
    <scope>NUCLEOTIDE SEQUENCE [GENOMIC DNA]</scope>
    <source>
        <strain>427</strain>
    </source>
</reference>
<name>RL30_TRYBB</name>
<gene>
    <name type="primary">RPL30</name>
</gene>
<keyword id="KW-0002">3D-structure</keyword>
<keyword id="KW-0687">Ribonucleoprotein</keyword>
<keyword id="KW-0689">Ribosomal protein</keyword>
<feature type="chain" id="PRO_0000146129" description="Large ribosomal subunit protein eL30">
    <location>
        <begin position="1"/>
        <end position="105"/>
    </location>
</feature>
<sequence>MAKKVKSKVDTINTKIQLVMKSGKYVLGTQQSLKTLRQGRSKLVVISANCPPIRKAEIEYYCTLSKTPIHHYSGNNLDLGTACGRHFRACVLSITDVGDSDITSA</sequence>
<dbReference type="EMBL" id="Z54339">
    <property type="protein sequence ID" value="CAA91140.1"/>
    <property type="molecule type" value="Genomic_DNA"/>
</dbReference>
<dbReference type="EMBL" id="Z54338">
    <property type="protein sequence ID" value="CAA91139.1"/>
    <property type="molecule type" value="Genomic_DNA"/>
</dbReference>
<dbReference type="PDB" id="8OVA">
    <property type="method" value="EM"/>
    <property type="resolution" value="2.47 A"/>
    <property type="chains" value="Bg=1-105"/>
</dbReference>
<dbReference type="PDB" id="8OVE">
    <property type="method" value="EM"/>
    <property type="resolution" value="2.60 A"/>
    <property type="chains" value="Bg=1-105"/>
</dbReference>
<dbReference type="PDBsum" id="8OVA"/>
<dbReference type="PDBsum" id="8OVE"/>
<dbReference type="EMDB" id="EMD-17208"/>
<dbReference type="EMDB" id="EMD-17212"/>
<dbReference type="SMR" id="P49153"/>
<dbReference type="GO" id="GO:0005737">
    <property type="term" value="C:cytoplasm"/>
    <property type="evidence" value="ECO:0000314"/>
    <property type="project" value="GeneDB"/>
</dbReference>
<dbReference type="GO" id="GO:1990904">
    <property type="term" value="C:ribonucleoprotein complex"/>
    <property type="evidence" value="ECO:0007669"/>
    <property type="project" value="UniProtKB-KW"/>
</dbReference>
<dbReference type="GO" id="GO:0005840">
    <property type="term" value="C:ribosome"/>
    <property type="evidence" value="ECO:0000255"/>
    <property type="project" value="GeneDB"/>
</dbReference>
<dbReference type="GO" id="GO:0003723">
    <property type="term" value="F:RNA binding"/>
    <property type="evidence" value="ECO:0007669"/>
    <property type="project" value="InterPro"/>
</dbReference>
<dbReference type="GO" id="GO:0003735">
    <property type="term" value="F:structural constituent of ribosome"/>
    <property type="evidence" value="ECO:0000255"/>
    <property type="project" value="GeneDB"/>
</dbReference>
<dbReference type="GO" id="GO:0006412">
    <property type="term" value="P:translation"/>
    <property type="evidence" value="ECO:0000255"/>
    <property type="project" value="GeneDB"/>
</dbReference>
<dbReference type="FunFam" id="3.30.1330.30:FF:000001">
    <property type="entry name" value="60S ribosomal protein L30"/>
    <property type="match status" value="1"/>
</dbReference>
<dbReference type="Gene3D" id="3.30.1330.30">
    <property type="match status" value="1"/>
</dbReference>
<dbReference type="InterPro" id="IPR039109">
    <property type="entry name" value="Ribosomal_eL30-like"/>
</dbReference>
<dbReference type="InterPro" id="IPR029064">
    <property type="entry name" value="Ribosomal_eL30-like_sf"/>
</dbReference>
<dbReference type="InterPro" id="IPR022991">
    <property type="entry name" value="Ribosomal_eL30_CS"/>
</dbReference>
<dbReference type="InterPro" id="IPR004038">
    <property type="entry name" value="Ribosomal_eL8/eL30/eS12/Gad45"/>
</dbReference>
<dbReference type="NCBIfam" id="NF002172">
    <property type="entry name" value="PRK01018.1"/>
    <property type="match status" value="1"/>
</dbReference>
<dbReference type="PANTHER" id="PTHR11449">
    <property type="entry name" value="RIBOSOMAL PROTEIN L30"/>
    <property type="match status" value="1"/>
</dbReference>
<dbReference type="Pfam" id="PF01248">
    <property type="entry name" value="Ribosomal_L7Ae"/>
    <property type="match status" value="1"/>
</dbReference>
<dbReference type="SUPFAM" id="SSF55315">
    <property type="entry name" value="L30e-like"/>
    <property type="match status" value="1"/>
</dbReference>
<dbReference type="PROSITE" id="PS00709">
    <property type="entry name" value="RIBOSOMAL_L30E_1"/>
    <property type="match status" value="1"/>
</dbReference>
<dbReference type="PROSITE" id="PS00993">
    <property type="entry name" value="RIBOSOMAL_L30E_2"/>
    <property type="match status" value="1"/>
</dbReference>
<protein>
    <recommendedName>
        <fullName evidence="1">Large ribosomal subunit protein eL30</fullName>
    </recommendedName>
    <alternativeName>
        <fullName>60S ribosomal protein L30</fullName>
    </alternativeName>
</protein>
<comment type="similarity">
    <text evidence="1">Belongs to the eukaryotic ribosomal protein eL30 family.</text>
</comment>